<feature type="chain" id="PRO_1000083547" description="Succinylglutamate desuccinylase">
    <location>
        <begin position="1"/>
        <end position="322"/>
    </location>
</feature>
<feature type="active site" evidence="1">
    <location>
        <position position="210"/>
    </location>
</feature>
<feature type="binding site" evidence="1">
    <location>
        <position position="53"/>
    </location>
    <ligand>
        <name>Zn(2+)</name>
        <dbReference type="ChEBI" id="CHEBI:29105"/>
    </ligand>
</feature>
<feature type="binding site" evidence="1">
    <location>
        <position position="56"/>
    </location>
    <ligand>
        <name>Zn(2+)</name>
        <dbReference type="ChEBI" id="CHEBI:29105"/>
    </ligand>
</feature>
<feature type="binding site" evidence="1">
    <location>
        <position position="147"/>
    </location>
    <ligand>
        <name>Zn(2+)</name>
        <dbReference type="ChEBI" id="CHEBI:29105"/>
    </ligand>
</feature>
<protein>
    <recommendedName>
        <fullName evidence="1">Succinylglutamate desuccinylase</fullName>
        <ecNumber evidence="1">3.5.1.96</ecNumber>
    </recommendedName>
</protein>
<comment type="function">
    <text evidence="1">Transforms N(2)-succinylglutamate into succinate and glutamate.</text>
</comment>
<comment type="catalytic activity">
    <reaction evidence="1">
        <text>N-succinyl-L-glutamate + H2O = L-glutamate + succinate</text>
        <dbReference type="Rhea" id="RHEA:15169"/>
        <dbReference type="ChEBI" id="CHEBI:15377"/>
        <dbReference type="ChEBI" id="CHEBI:29985"/>
        <dbReference type="ChEBI" id="CHEBI:30031"/>
        <dbReference type="ChEBI" id="CHEBI:58763"/>
        <dbReference type="EC" id="3.5.1.96"/>
    </reaction>
</comment>
<comment type="cofactor">
    <cofactor evidence="1">
        <name>Zn(2+)</name>
        <dbReference type="ChEBI" id="CHEBI:29105"/>
    </cofactor>
    <text evidence="1">Binds 1 zinc ion per subunit.</text>
</comment>
<comment type="pathway">
    <text evidence="1">Amino-acid degradation; L-arginine degradation via AST pathway; L-glutamate and succinate from L-arginine: step 5/5.</text>
</comment>
<comment type="similarity">
    <text evidence="1">Belongs to the AspA/AstE family. Succinylglutamate desuccinylase subfamily.</text>
</comment>
<gene>
    <name evidence="1" type="primary">astE</name>
    <name type="ordered locus">SPAB_02036</name>
</gene>
<reference key="1">
    <citation type="submission" date="2007-11" db="EMBL/GenBank/DDBJ databases">
        <authorList>
            <consortium name="The Salmonella enterica serovar Paratyphi B Genome Sequencing Project"/>
            <person name="McClelland M."/>
            <person name="Sanderson E.K."/>
            <person name="Porwollik S."/>
            <person name="Spieth J."/>
            <person name="Clifton W.S."/>
            <person name="Fulton R."/>
            <person name="Cordes M."/>
            <person name="Wollam A."/>
            <person name="Shah N."/>
            <person name="Pepin K."/>
            <person name="Bhonagiri V."/>
            <person name="Nash W."/>
            <person name="Johnson M."/>
            <person name="Thiruvilangam P."/>
            <person name="Wilson R."/>
        </authorList>
    </citation>
    <scope>NUCLEOTIDE SEQUENCE [LARGE SCALE GENOMIC DNA]</scope>
    <source>
        <strain>ATCC BAA-1250 / SPB7</strain>
    </source>
</reference>
<name>ASTE_SALPB</name>
<evidence type="ECO:0000255" key="1">
    <source>
        <dbReference type="HAMAP-Rule" id="MF_00767"/>
    </source>
</evidence>
<organism>
    <name type="scientific">Salmonella paratyphi B (strain ATCC BAA-1250 / SPB7)</name>
    <dbReference type="NCBI Taxonomy" id="1016998"/>
    <lineage>
        <taxon>Bacteria</taxon>
        <taxon>Pseudomonadati</taxon>
        <taxon>Pseudomonadota</taxon>
        <taxon>Gammaproteobacteria</taxon>
        <taxon>Enterobacterales</taxon>
        <taxon>Enterobacteriaceae</taxon>
        <taxon>Salmonella</taxon>
    </lineage>
</organism>
<sequence length="322" mass="35549">MDNFLALTLSGTTPRVTQGKGAGFRWRWLGHGLLELTPDAPVDRALILSAGIHGNETAPVEMLDRLLSALFSGSLTLTWRVLVVLGNPQALAAGIRYCHSDMNRMFGGRWQSFAESDETRRARELELSLETFFSSGQARVRWHLDLHTAIRGSHHLRFGVLPQRDRPWETDFLAWLGAAGLEALVFHQAPGGTFTHFSSEHFGALSCTLELGKALPFGQNDLTQFNVTSQALSALLSGVETSTSSSPPLRYRVVSQITRHSDKFALYMDVQTLNFTVFAKGTLLAEEGDKRVTVTHDVEYVLFPNPSVACGLRAGLMLERLP</sequence>
<proteinExistence type="inferred from homology"/>
<accession>A9N274</accession>
<keyword id="KW-0056">Arginine metabolism</keyword>
<keyword id="KW-0378">Hydrolase</keyword>
<keyword id="KW-0479">Metal-binding</keyword>
<keyword id="KW-0862">Zinc</keyword>
<dbReference type="EC" id="3.5.1.96" evidence="1"/>
<dbReference type="EMBL" id="CP000886">
    <property type="protein sequence ID" value="ABX67423.1"/>
    <property type="molecule type" value="Genomic_DNA"/>
</dbReference>
<dbReference type="RefSeq" id="WP_000368456.1">
    <property type="nucleotide sequence ID" value="NC_010102.1"/>
</dbReference>
<dbReference type="SMR" id="A9N274"/>
<dbReference type="KEGG" id="spq:SPAB_02036"/>
<dbReference type="PATRIC" id="fig|1016998.12.peg.1924"/>
<dbReference type="HOGENOM" id="CLU_071608_0_0_6"/>
<dbReference type="BioCyc" id="SENT1016998:SPAB_RS08310-MONOMER"/>
<dbReference type="UniPathway" id="UPA00185">
    <property type="reaction ID" value="UER00283"/>
</dbReference>
<dbReference type="Proteomes" id="UP000008556">
    <property type="component" value="Chromosome"/>
</dbReference>
<dbReference type="GO" id="GO:0016788">
    <property type="term" value="F:hydrolase activity, acting on ester bonds"/>
    <property type="evidence" value="ECO:0007669"/>
    <property type="project" value="UniProtKB-UniRule"/>
</dbReference>
<dbReference type="GO" id="GO:0009017">
    <property type="term" value="F:succinylglutamate desuccinylase activity"/>
    <property type="evidence" value="ECO:0007669"/>
    <property type="project" value="UniProtKB-EC"/>
</dbReference>
<dbReference type="GO" id="GO:0008270">
    <property type="term" value="F:zinc ion binding"/>
    <property type="evidence" value="ECO:0007669"/>
    <property type="project" value="UniProtKB-UniRule"/>
</dbReference>
<dbReference type="GO" id="GO:0019544">
    <property type="term" value="P:arginine catabolic process to glutamate"/>
    <property type="evidence" value="ECO:0007669"/>
    <property type="project" value="UniProtKB-UniRule"/>
</dbReference>
<dbReference type="GO" id="GO:0019545">
    <property type="term" value="P:arginine catabolic process to succinate"/>
    <property type="evidence" value="ECO:0007669"/>
    <property type="project" value="UniProtKB-UniRule"/>
</dbReference>
<dbReference type="CDD" id="cd03855">
    <property type="entry name" value="M14_ASTE"/>
    <property type="match status" value="1"/>
</dbReference>
<dbReference type="FunFam" id="3.40.630.10:FF:000017">
    <property type="entry name" value="Succinylglutamate desuccinylase"/>
    <property type="match status" value="1"/>
</dbReference>
<dbReference type="Gene3D" id="3.40.630.10">
    <property type="entry name" value="Zn peptidases"/>
    <property type="match status" value="1"/>
</dbReference>
<dbReference type="HAMAP" id="MF_00767">
    <property type="entry name" value="Arg_catab_AstE"/>
    <property type="match status" value="1"/>
</dbReference>
<dbReference type="InterPro" id="IPR050178">
    <property type="entry name" value="AspA/AstE_fam"/>
</dbReference>
<dbReference type="InterPro" id="IPR055438">
    <property type="entry name" value="AstE_AspA_cat"/>
</dbReference>
<dbReference type="InterPro" id="IPR007036">
    <property type="entry name" value="Aste_AspA_hybrid_dom"/>
</dbReference>
<dbReference type="InterPro" id="IPR016681">
    <property type="entry name" value="SuccinylGlu_desuccinylase"/>
</dbReference>
<dbReference type="NCBIfam" id="TIGR03242">
    <property type="entry name" value="arg_catab_astE"/>
    <property type="match status" value="1"/>
</dbReference>
<dbReference type="NCBIfam" id="NF003706">
    <property type="entry name" value="PRK05324.1"/>
    <property type="match status" value="1"/>
</dbReference>
<dbReference type="PANTHER" id="PTHR15162">
    <property type="entry name" value="ASPARTOACYLASE"/>
    <property type="match status" value="1"/>
</dbReference>
<dbReference type="PANTHER" id="PTHR15162:SF7">
    <property type="entry name" value="SUCCINYLGLUTAMATE DESUCCINYLASE"/>
    <property type="match status" value="1"/>
</dbReference>
<dbReference type="Pfam" id="PF24827">
    <property type="entry name" value="AstE_AspA_cat"/>
    <property type="match status" value="1"/>
</dbReference>
<dbReference type="Pfam" id="PF04952">
    <property type="entry name" value="AstE_AspA_hybrid"/>
    <property type="match status" value="1"/>
</dbReference>
<dbReference type="PIRSF" id="PIRSF017020">
    <property type="entry name" value="AstE"/>
    <property type="match status" value="1"/>
</dbReference>
<dbReference type="SUPFAM" id="SSF53187">
    <property type="entry name" value="Zn-dependent exopeptidases"/>
    <property type="match status" value="1"/>
</dbReference>